<reference key="1">
    <citation type="journal article" date="2008" name="J. Bacteriol.">
        <title>Insights into plant cell wall degradation from the genome sequence of the soil bacterium Cellvibrio japonicus.</title>
        <authorList>
            <person name="DeBoy R.T."/>
            <person name="Mongodin E.F."/>
            <person name="Fouts D.E."/>
            <person name="Tailford L.E."/>
            <person name="Khouri H."/>
            <person name="Emerson J.B."/>
            <person name="Mohamoud Y."/>
            <person name="Watkins K."/>
            <person name="Henrissat B."/>
            <person name="Gilbert H.J."/>
            <person name="Nelson K.E."/>
        </authorList>
    </citation>
    <scope>NUCLEOTIDE SEQUENCE [LARGE SCALE GENOMIC DNA]</scope>
    <source>
        <strain>Ueda107</strain>
    </source>
</reference>
<sequence>MSDRIAQVTRNTLETKISVSLNLDGAGKGVFNTGVPFLEHMMDQIARHGMIDLDVTCDGDTHIDDHHSVEDIGITIGQAIAKAVGDKKGIRRYGHAYVPLDEALSRVVIDFSGRPGLVMDIPFTQKRIGQFDTELFWEFFQGFVNHAGVTLHVDNLRGHNAHHQIETVFKAFGRALRMALEKDPRMEGIMPSTKGSL</sequence>
<organism>
    <name type="scientific">Cellvibrio japonicus (strain Ueda107)</name>
    <name type="common">Pseudomonas fluorescens subsp. cellulosa</name>
    <dbReference type="NCBI Taxonomy" id="498211"/>
    <lineage>
        <taxon>Bacteria</taxon>
        <taxon>Pseudomonadati</taxon>
        <taxon>Pseudomonadota</taxon>
        <taxon>Gammaproteobacteria</taxon>
        <taxon>Cellvibrionales</taxon>
        <taxon>Cellvibrionaceae</taxon>
        <taxon>Cellvibrio</taxon>
    </lineage>
</organism>
<dbReference type="EC" id="4.2.1.19" evidence="1"/>
<dbReference type="EMBL" id="CP000934">
    <property type="protein sequence ID" value="ACE84708.1"/>
    <property type="molecule type" value="Genomic_DNA"/>
</dbReference>
<dbReference type="RefSeq" id="WP_012485839.1">
    <property type="nucleotide sequence ID" value="NC_010995.1"/>
</dbReference>
<dbReference type="SMR" id="B3PGA1"/>
<dbReference type="STRING" id="498211.CJA_0156"/>
<dbReference type="KEGG" id="cja:CJA_0156"/>
<dbReference type="eggNOG" id="COG0131">
    <property type="taxonomic scope" value="Bacteria"/>
</dbReference>
<dbReference type="HOGENOM" id="CLU_044308_3_0_6"/>
<dbReference type="OrthoDB" id="9790411at2"/>
<dbReference type="UniPathway" id="UPA00031">
    <property type="reaction ID" value="UER00011"/>
</dbReference>
<dbReference type="Proteomes" id="UP000001036">
    <property type="component" value="Chromosome"/>
</dbReference>
<dbReference type="GO" id="GO:0005737">
    <property type="term" value="C:cytoplasm"/>
    <property type="evidence" value="ECO:0007669"/>
    <property type="project" value="UniProtKB-SubCell"/>
</dbReference>
<dbReference type="GO" id="GO:0004424">
    <property type="term" value="F:imidazoleglycerol-phosphate dehydratase activity"/>
    <property type="evidence" value="ECO:0007669"/>
    <property type="project" value="UniProtKB-UniRule"/>
</dbReference>
<dbReference type="GO" id="GO:0000105">
    <property type="term" value="P:L-histidine biosynthetic process"/>
    <property type="evidence" value="ECO:0007669"/>
    <property type="project" value="UniProtKB-UniRule"/>
</dbReference>
<dbReference type="CDD" id="cd07914">
    <property type="entry name" value="IGPD"/>
    <property type="match status" value="1"/>
</dbReference>
<dbReference type="FunFam" id="3.30.230.40:FF:000002">
    <property type="entry name" value="Imidazoleglycerol-phosphate dehydratase"/>
    <property type="match status" value="1"/>
</dbReference>
<dbReference type="FunFam" id="3.30.230.40:FF:000003">
    <property type="entry name" value="Imidazoleglycerol-phosphate dehydratase HisB"/>
    <property type="match status" value="1"/>
</dbReference>
<dbReference type="Gene3D" id="3.30.230.40">
    <property type="entry name" value="Imidazole glycerol phosphate dehydratase, domain 1"/>
    <property type="match status" value="2"/>
</dbReference>
<dbReference type="HAMAP" id="MF_00076">
    <property type="entry name" value="HisB"/>
    <property type="match status" value="1"/>
</dbReference>
<dbReference type="InterPro" id="IPR038494">
    <property type="entry name" value="IGPD_sf"/>
</dbReference>
<dbReference type="InterPro" id="IPR000807">
    <property type="entry name" value="ImidazoleglycerolP_deHydtase"/>
</dbReference>
<dbReference type="InterPro" id="IPR020565">
    <property type="entry name" value="ImidazoleglycerP_deHydtase_CS"/>
</dbReference>
<dbReference type="InterPro" id="IPR020568">
    <property type="entry name" value="Ribosomal_Su5_D2-typ_SF"/>
</dbReference>
<dbReference type="NCBIfam" id="NF002106">
    <property type="entry name" value="PRK00951.1-1"/>
    <property type="match status" value="1"/>
</dbReference>
<dbReference type="NCBIfam" id="NF002109">
    <property type="entry name" value="PRK00951.1-5"/>
    <property type="match status" value="1"/>
</dbReference>
<dbReference type="NCBIfam" id="NF002111">
    <property type="entry name" value="PRK00951.2-1"/>
    <property type="match status" value="1"/>
</dbReference>
<dbReference type="NCBIfam" id="NF002114">
    <property type="entry name" value="PRK00951.2-4"/>
    <property type="match status" value="1"/>
</dbReference>
<dbReference type="PANTHER" id="PTHR23133:SF2">
    <property type="entry name" value="IMIDAZOLEGLYCEROL-PHOSPHATE DEHYDRATASE"/>
    <property type="match status" value="1"/>
</dbReference>
<dbReference type="PANTHER" id="PTHR23133">
    <property type="entry name" value="IMIDAZOLEGLYCEROL-PHOSPHATE DEHYDRATASE HIS7"/>
    <property type="match status" value="1"/>
</dbReference>
<dbReference type="Pfam" id="PF00475">
    <property type="entry name" value="IGPD"/>
    <property type="match status" value="1"/>
</dbReference>
<dbReference type="SUPFAM" id="SSF54211">
    <property type="entry name" value="Ribosomal protein S5 domain 2-like"/>
    <property type="match status" value="2"/>
</dbReference>
<dbReference type="PROSITE" id="PS00954">
    <property type="entry name" value="IGP_DEHYDRATASE_1"/>
    <property type="match status" value="1"/>
</dbReference>
<dbReference type="PROSITE" id="PS00955">
    <property type="entry name" value="IGP_DEHYDRATASE_2"/>
    <property type="match status" value="1"/>
</dbReference>
<comment type="catalytic activity">
    <reaction evidence="1">
        <text>D-erythro-1-(imidazol-4-yl)glycerol 3-phosphate = 3-(imidazol-4-yl)-2-oxopropyl phosphate + H2O</text>
        <dbReference type="Rhea" id="RHEA:11040"/>
        <dbReference type="ChEBI" id="CHEBI:15377"/>
        <dbReference type="ChEBI" id="CHEBI:57766"/>
        <dbReference type="ChEBI" id="CHEBI:58278"/>
        <dbReference type="EC" id="4.2.1.19"/>
    </reaction>
</comment>
<comment type="pathway">
    <text evidence="1">Amino-acid biosynthesis; L-histidine biosynthesis; L-histidine from 5-phospho-alpha-D-ribose 1-diphosphate: step 6/9.</text>
</comment>
<comment type="subcellular location">
    <subcellularLocation>
        <location evidence="1">Cytoplasm</location>
    </subcellularLocation>
</comment>
<comment type="similarity">
    <text evidence="1">Belongs to the imidazoleglycerol-phosphate dehydratase family.</text>
</comment>
<protein>
    <recommendedName>
        <fullName evidence="1">Imidazoleglycerol-phosphate dehydratase</fullName>
        <shortName evidence="1">IGPD</shortName>
        <ecNumber evidence="1">4.2.1.19</ecNumber>
    </recommendedName>
</protein>
<proteinExistence type="inferred from homology"/>
<accession>B3PGA1</accession>
<feature type="chain" id="PRO_1000092680" description="Imidazoleglycerol-phosphate dehydratase">
    <location>
        <begin position="1"/>
        <end position="197"/>
    </location>
</feature>
<keyword id="KW-0028">Amino-acid biosynthesis</keyword>
<keyword id="KW-0963">Cytoplasm</keyword>
<keyword id="KW-0368">Histidine biosynthesis</keyword>
<keyword id="KW-0456">Lyase</keyword>
<keyword id="KW-1185">Reference proteome</keyword>
<gene>
    <name evidence="1" type="primary">hisB</name>
    <name type="ordered locus">CJA_0156</name>
</gene>
<name>HIS7_CELJU</name>
<evidence type="ECO:0000255" key="1">
    <source>
        <dbReference type="HAMAP-Rule" id="MF_00076"/>
    </source>
</evidence>